<sequence length="497" mass="54457">MALSHRLELRQGQGLVITPQLQQAIKLLQLSNIELDAFVEAELERNPLLQRDEGDHEPAVEVEAERDASLTQVDAVADTTAGRELDTPVDDVSPGERATGEGTDAEHAGGQIDWSRAGGGGSFESDEGYERALTDSPTLAAHLRTQLVQAALSPAHNAIAEILIDAVDEGGYLRLDIVELADRLGCALALVEETLSVLQGFEPVGVFARDVRECLALQLKDLNRYDPAMAAMLDHLELLAKRDMAGLRRICGVDDEDLREMIGEIRSLNPRPGAAYHSEPAETLVPDVMVREGLGGMWHVELNTDTLPRVLVDQRYHARVSKGARSDQEKTFVADCMASANWLVKSLDQRAKTILKVASEIVRQQDGFLAFGVEHLRPLNLKTVADAIGMHESTVSRVTSNKYIATPRGVFELKFFFTSAIQSSEGGEAHSAASVRHKIKGLVDAEKCEADVHSDDRIVEILKAAGVDIARRTVAKYREAMRIPSSVERRRLMKEAV</sequence>
<reference key="1">
    <citation type="journal article" date="1992" name="Genes Dev.">
        <title>A temporally controlled sigma-factor is required for polar morphogenesis and normal cell division in Caulobacter.</title>
        <authorList>
            <person name="Brun Y.V."/>
            <person name="Shapiro L."/>
        </authorList>
    </citation>
    <scope>NUCLEOTIDE SEQUENCE [GENOMIC DNA]</scope>
    <source>
        <strain>ATCC 19089 / CIP 103742 / CB 15</strain>
    </source>
</reference>
<reference key="2">
    <citation type="submission" date="1997-06" db="EMBL/GenBank/DDBJ databases">
        <authorList>
            <person name="Janakiraman R.S."/>
        </authorList>
    </citation>
    <scope>SEQUENCE REVISION</scope>
</reference>
<reference key="3">
    <citation type="journal article" date="1995" name="Mol. Gen. Genet.">
        <title>Regulation of the Caulobacter crescentus rpoN gene and function of the purified sigma 54 in flagellar gene transcription.</title>
        <authorList>
            <person name="Anderson D.K."/>
            <person name="Ohta N."/>
            <person name="Wu J."/>
            <person name="Newton A."/>
        </authorList>
    </citation>
    <scope>NUCLEOTIDE SEQUENCE [GENOMIC DNA]</scope>
    <source>
        <strain>ATCC 19089 / CIP 103742 / CB 15</strain>
    </source>
</reference>
<reference key="4">
    <citation type="journal article" date="1997" name="J. Bacteriol.">
        <title>Transcriptional and mutational analyses of the rpoN operon in Caulobacter crescentus.</title>
        <authorList>
            <person name="Janakiraman R.S."/>
            <person name="Brun Y.V."/>
        </authorList>
    </citation>
    <scope>NUCLEOTIDE SEQUENCE [GENOMIC DNA]</scope>
</reference>
<reference key="5">
    <citation type="journal article" date="2001" name="Proc. Natl. Acad. Sci. U.S.A.">
        <title>Complete genome sequence of Caulobacter crescentus.</title>
        <authorList>
            <person name="Nierman W.C."/>
            <person name="Feldblyum T.V."/>
            <person name="Laub M.T."/>
            <person name="Paulsen I.T."/>
            <person name="Nelson K.E."/>
            <person name="Eisen J.A."/>
            <person name="Heidelberg J.F."/>
            <person name="Alley M.R.K."/>
            <person name="Ohta N."/>
            <person name="Maddock J.R."/>
            <person name="Potocka I."/>
            <person name="Nelson W.C."/>
            <person name="Newton A."/>
            <person name="Stephens C."/>
            <person name="Phadke N.D."/>
            <person name="Ely B."/>
            <person name="DeBoy R.T."/>
            <person name="Dodson R.J."/>
            <person name="Durkin A.S."/>
            <person name="Gwinn M.L."/>
            <person name="Haft D.H."/>
            <person name="Kolonay J.F."/>
            <person name="Smit J."/>
            <person name="Craven M.B."/>
            <person name="Khouri H.M."/>
            <person name="Shetty J."/>
            <person name="Berry K.J."/>
            <person name="Utterback T.R."/>
            <person name="Tran K."/>
            <person name="Wolf A.M."/>
            <person name="Vamathevan J.J."/>
            <person name="Ermolaeva M.D."/>
            <person name="White O."/>
            <person name="Salzberg S.L."/>
            <person name="Venter J.C."/>
            <person name="Shapiro L."/>
            <person name="Fraser C.M."/>
        </authorList>
    </citation>
    <scope>NUCLEOTIDE SEQUENCE [LARGE SCALE GENOMIC DNA]</scope>
    <source>
        <strain>ATCC 19089 / CIP 103742 / CB 15</strain>
    </source>
</reference>
<dbReference type="EMBL" id="X68549">
    <property type="protein sequence ID" value="CAA48553.1"/>
    <property type="molecule type" value="Genomic_DNA"/>
</dbReference>
<dbReference type="EMBL" id="L11003">
    <property type="protein sequence ID" value="AAA73956.1"/>
    <property type="molecule type" value="Genomic_DNA"/>
</dbReference>
<dbReference type="EMBL" id="AF006743">
    <property type="protein sequence ID" value="AAC45594.1"/>
    <property type="molecule type" value="Genomic_DNA"/>
</dbReference>
<dbReference type="EMBL" id="AE005673">
    <property type="protein sequence ID" value="AAK25561.1"/>
    <property type="molecule type" value="Genomic_DNA"/>
</dbReference>
<dbReference type="PIR" id="S54743">
    <property type="entry name" value="I40668"/>
</dbReference>
<dbReference type="RefSeq" id="NP_422393.1">
    <property type="nucleotide sequence ID" value="NC_002696.2"/>
</dbReference>
<dbReference type="RefSeq" id="WP_010921426.1">
    <property type="nucleotide sequence ID" value="NC_002696.2"/>
</dbReference>
<dbReference type="SMR" id="Q03408"/>
<dbReference type="STRING" id="190650.CC_3599"/>
<dbReference type="EnsemblBacteria" id="AAK25561">
    <property type="protein sequence ID" value="AAK25561"/>
    <property type="gene ID" value="CC_3599"/>
</dbReference>
<dbReference type="KEGG" id="ccr:CC_3599"/>
<dbReference type="PATRIC" id="fig|190650.5.peg.3602"/>
<dbReference type="eggNOG" id="COG1508">
    <property type="taxonomic scope" value="Bacteria"/>
</dbReference>
<dbReference type="HOGENOM" id="CLU_020569_0_0_5"/>
<dbReference type="BioCyc" id="CAULO:CC3599-MONOMER"/>
<dbReference type="Proteomes" id="UP000001816">
    <property type="component" value="Chromosome"/>
</dbReference>
<dbReference type="GO" id="GO:0000428">
    <property type="term" value="C:DNA-directed RNA polymerase complex"/>
    <property type="evidence" value="ECO:0007669"/>
    <property type="project" value="UniProtKB-KW"/>
</dbReference>
<dbReference type="GO" id="GO:0003677">
    <property type="term" value="F:DNA binding"/>
    <property type="evidence" value="ECO:0007669"/>
    <property type="project" value="UniProtKB-KW"/>
</dbReference>
<dbReference type="GO" id="GO:0001216">
    <property type="term" value="F:DNA-binding transcription activator activity"/>
    <property type="evidence" value="ECO:0007669"/>
    <property type="project" value="InterPro"/>
</dbReference>
<dbReference type="GO" id="GO:0016779">
    <property type="term" value="F:nucleotidyltransferase activity"/>
    <property type="evidence" value="ECO:0007669"/>
    <property type="project" value="UniProtKB-KW"/>
</dbReference>
<dbReference type="GO" id="GO:0016987">
    <property type="term" value="F:sigma factor activity"/>
    <property type="evidence" value="ECO:0007669"/>
    <property type="project" value="UniProtKB-KW"/>
</dbReference>
<dbReference type="GO" id="GO:0006352">
    <property type="term" value="P:DNA-templated transcription initiation"/>
    <property type="evidence" value="ECO:0007669"/>
    <property type="project" value="InterPro"/>
</dbReference>
<dbReference type="Gene3D" id="1.10.10.60">
    <property type="entry name" value="Homeodomain-like"/>
    <property type="match status" value="1"/>
</dbReference>
<dbReference type="Gene3D" id="1.10.10.1330">
    <property type="entry name" value="RNA polymerase sigma-54 factor, core-binding domain"/>
    <property type="match status" value="1"/>
</dbReference>
<dbReference type="InterPro" id="IPR000394">
    <property type="entry name" value="RNA_pol_sigma_54"/>
</dbReference>
<dbReference type="InterPro" id="IPR007046">
    <property type="entry name" value="RNA_pol_sigma_54_core-bd"/>
</dbReference>
<dbReference type="InterPro" id="IPR007634">
    <property type="entry name" value="RNA_pol_sigma_54_DNA-bd"/>
</dbReference>
<dbReference type="InterPro" id="IPR038709">
    <property type="entry name" value="RpoN_core-bd_sf"/>
</dbReference>
<dbReference type="NCBIfam" id="NF004596">
    <property type="entry name" value="PRK05932.1-3"/>
    <property type="match status" value="1"/>
</dbReference>
<dbReference type="NCBIfam" id="NF009118">
    <property type="entry name" value="PRK12469.1"/>
    <property type="match status" value="1"/>
</dbReference>
<dbReference type="NCBIfam" id="TIGR02395">
    <property type="entry name" value="rpoN_sigma"/>
    <property type="match status" value="1"/>
</dbReference>
<dbReference type="PANTHER" id="PTHR32248">
    <property type="entry name" value="RNA POLYMERASE SIGMA-54 FACTOR"/>
    <property type="match status" value="1"/>
</dbReference>
<dbReference type="PANTHER" id="PTHR32248:SF4">
    <property type="entry name" value="RNA POLYMERASE SIGMA-54 FACTOR"/>
    <property type="match status" value="1"/>
</dbReference>
<dbReference type="Pfam" id="PF00309">
    <property type="entry name" value="Sigma54_AID"/>
    <property type="match status" value="1"/>
</dbReference>
<dbReference type="Pfam" id="PF04963">
    <property type="entry name" value="Sigma54_CBD"/>
    <property type="match status" value="1"/>
</dbReference>
<dbReference type="Pfam" id="PF04552">
    <property type="entry name" value="Sigma54_DBD"/>
    <property type="match status" value="1"/>
</dbReference>
<dbReference type="PIRSF" id="PIRSF000774">
    <property type="entry name" value="RpoN"/>
    <property type="match status" value="1"/>
</dbReference>
<dbReference type="PRINTS" id="PR00045">
    <property type="entry name" value="SIGMA54FCT"/>
</dbReference>
<dbReference type="PROSITE" id="PS00717">
    <property type="entry name" value="SIGMA54_1"/>
    <property type="match status" value="1"/>
</dbReference>
<dbReference type="PROSITE" id="PS00718">
    <property type="entry name" value="SIGMA54_2"/>
    <property type="match status" value="1"/>
</dbReference>
<dbReference type="PROSITE" id="PS50044">
    <property type="entry name" value="SIGMA54_3"/>
    <property type="match status" value="1"/>
</dbReference>
<proteinExistence type="inferred from homology"/>
<organism>
    <name type="scientific">Caulobacter vibrioides (strain ATCC 19089 / CIP 103742 / CB 15)</name>
    <name type="common">Caulobacter crescentus</name>
    <dbReference type="NCBI Taxonomy" id="190650"/>
    <lineage>
        <taxon>Bacteria</taxon>
        <taxon>Pseudomonadati</taxon>
        <taxon>Pseudomonadota</taxon>
        <taxon>Alphaproteobacteria</taxon>
        <taxon>Caulobacterales</taxon>
        <taxon>Caulobacteraceae</taxon>
        <taxon>Caulobacter</taxon>
    </lineage>
</organism>
<comment type="function">
    <text>Sigma factors are initiation factors that promote the attachment of RNA polymerase to specific initiation sites and are then released. This sigma factor is responsible for the expression of the nitrogen fixation genes. This sigma factor is required for the de novo biogenesis of both flagellum and stalk, and for polar morphogenesis and normal cell division. It may not be involved in nitrogen assimilation.</text>
</comment>
<comment type="similarity">
    <text evidence="3">Belongs to the sigma-54 factor family.</text>
</comment>
<protein>
    <recommendedName>
        <fullName>RNA polymerase sigma-54 factor</fullName>
    </recommendedName>
</protein>
<keyword id="KW-0238">DNA-binding</keyword>
<keyword id="KW-0240">DNA-directed RNA polymerase</keyword>
<keyword id="KW-0548">Nucleotidyltransferase</keyword>
<keyword id="KW-1185">Reference proteome</keyword>
<keyword id="KW-0731">Sigma factor</keyword>
<keyword id="KW-0804">Transcription</keyword>
<keyword id="KW-0805">Transcription regulation</keyword>
<keyword id="KW-0808">Transferase</keyword>
<accession>Q03408</accession>
<accession>O08456</accession>
<accession>O32343</accession>
<feature type="chain" id="PRO_0000205527" description="RNA polymerase sigma-54 factor">
    <location>
        <begin position="1"/>
        <end position="497"/>
    </location>
</feature>
<feature type="DNA-binding region" description="H-T-H motif" evidence="1">
    <location>
        <begin position="380"/>
        <end position="399"/>
    </location>
</feature>
<feature type="region of interest" description="Disordered" evidence="2">
    <location>
        <begin position="49"/>
        <end position="128"/>
    </location>
</feature>
<feature type="short sequence motif" description="RPON box">
    <location>
        <begin position="471"/>
        <end position="479"/>
    </location>
</feature>
<feature type="compositionally biased region" description="Basic and acidic residues" evidence="2">
    <location>
        <begin position="49"/>
        <end position="68"/>
    </location>
</feature>
<feature type="sequence conflict" description="In Ref. 1 and 4." evidence="3" ref="1 4">
    <original>K</original>
    <variation>M</variation>
    <location>
        <position position="26"/>
    </location>
</feature>
<gene>
    <name type="primary">rpoN</name>
    <name type="synonym">flbU</name>
    <name type="ordered locus">CC_3599</name>
</gene>
<evidence type="ECO:0000250" key="1"/>
<evidence type="ECO:0000256" key="2">
    <source>
        <dbReference type="SAM" id="MobiDB-lite"/>
    </source>
</evidence>
<evidence type="ECO:0000305" key="3"/>
<name>RP54_CAUVC</name>